<keyword id="KW-0256">Endoplasmic reticulum</keyword>
<keyword id="KW-0472">Membrane</keyword>
<keyword id="KW-1185">Reference proteome</keyword>
<keyword id="KW-0732">Signal</keyword>
<keyword id="KW-0812">Transmembrane</keyword>
<keyword id="KW-1133">Transmembrane helix</keyword>
<proteinExistence type="inferred from homology"/>
<dbReference type="EMBL" id="AF384990">
    <property type="protein sequence ID" value="AAO16964.1"/>
    <property type="molecule type" value="Genomic_DNA"/>
</dbReference>
<dbReference type="EMBL" id="AE016817">
    <property type="protein sequence ID" value="AAS51920.1"/>
    <property type="molecule type" value="Genomic_DNA"/>
</dbReference>
<dbReference type="RefSeq" id="NP_984096.1">
    <property type="nucleotide sequence ID" value="NM_209449.1"/>
</dbReference>
<dbReference type="FunCoup" id="Q8J1F5">
    <property type="interactions" value="34"/>
</dbReference>
<dbReference type="EnsemblFungi" id="AAS51920">
    <property type="protein sequence ID" value="AAS51920"/>
    <property type="gene ID" value="AGOS_ADL001C"/>
</dbReference>
<dbReference type="GeneID" id="4620244"/>
<dbReference type="KEGG" id="ago:AGOS_ADL001C"/>
<dbReference type="eggNOG" id="ENOG502S3VP">
    <property type="taxonomic scope" value="Eukaryota"/>
</dbReference>
<dbReference type="HOGENOM" id="CLU_078554_1_0_1"/>
<dbReference type="InParanoid" id="Q8J1F5"/>
<dbReference type="OMA" id="WLPETYK"/>
<dbReference type="OrthoDB" id="1926781at2759"/>
<dbReference type="Proteomes" id="UP000000591">
    <property type="component" value="Chromosome IV"/>
</dbReference>
<dbReference type="GO" id="GO:0005789">
    <property type="term" value="C:endoplasmic reticulum membrane"/>
    <property type="evidence" value="ECO:0007669"/>
    <property type="project" value="UniProtKB-SubCell"/>
</dbReference>
<dbReference type="InterPro" id="IPR005595">
    <property type="entry name" value="TRAP_alpha"/>
</dbReference>
<dbReference type="Pfam" id="PF03896">
    <property type="entry name" value="TRAP_alpha"/>
    <property type="match status" value="1"/>
</dbReference>
<reference key="1">
    <citation type="journal article" date="2004" name="Science">
        <title>The Ashbya gossypii genome as a tool for mapping the ancient Saccharomyces cerevisiae genome.</title>
        <authorList>
            <person name="Dietrich F.S."/>
            <person name="Voegeli S."/>
            <person name="Brachat S."/>
            <person name="Lerch A."/>
            <person name="Gates K."/>
            <person name="Steiner S."/>
            <person name="Mohr C."/>
            <person name="Poehlmann R."/>
            <person name="Luedi P."/>
            <person name="Choi S."/>
            <person name="Wing R.A."/>
            <person name="Flavier A."/>
            <person name="Gaffney T.D."/>
            <person name="Philippsen P."/>
        </authorList>
    </citation>
    <scope>NUCLEOTIDE SEQUENCE [LARGE SCALE GENOMIC DNA]</scope>
    <source>
        <strain>ATCC 10895 / CBS 109.51 / FGSC 9923 / NRRL Y-1056</strain>
    </source>
</reference>
<reference key="2">
    <citation type="journal article" date="2013" name="G3 (Bethesda)">
        <title>Genomes of Ashbya fungi isolated from insects reveal four mating-type loci, numerous translocations, lack of transposons, and distinct gene duplications.</title>
        <authorList>
            <person name="Dietrich F.S."/>
            <person name="Voegeli S."/>
            <person name="Kuo S."/>
            <person name="Philippsen P."/>
        </authorList>
    </citation>
    <scope>GENOME REANNOTATION</scope>
    <source>
        <strain>ATCC 10895 / CBS 109.51 / FGSC 9923 / NRRL Y-1056</strain>
    </source>
</reference>
<name>IRC22_EREGS</name>
<sequence length="220" mass="24593">MKLSNLLLFANVGTLLVKATDENISPNEENTPRYAQFNIDYSVLDQPNYDPMAPMEFENGENITLAFNFANNEEVPVKLIAVGGNIINARSGDEVANITRSSLGEIEVDVNTSVSFNQAINLKLDEGDYFLLPNVFVLKEGELMAVGTSPSRIKILPPPMSFFNPKFLSIQAVLIGVISYFTYFIFRSSKKERRGVVSKTKAPKKVKLDESWLPENHLKK</sequence>
<evidence type="ECO:0000250" key="1"/>
<evidence type="ECO:0000255" key="2"/>
<evidence type="ECO:0000305" key="3"/>
<comment type="function">
    <text>Is probably involved in a pathway contributing to genomic integrity.</text>
</comment>
<comment type="subcellular location">
    <subcellularLocation>
        <location evidence="1">Endoplasmic reticulum membrane</location>
        <topology evidence="1">Single-pass type I membrane protein</topology>
    </subcellularLocation>
</comment>
<comment type="similarity">
    <text evidence="3">Belongs to the IRC22 family.</text>
</comment>
<gene>
    <name type="primary">IRC22</name>
    <name type="ordered locus">ADL001C</name>
</gene>
<organism>
    <name type="scientific">Eremothecium gossypii (strain ATCC 10895 / CBS 109.51 / FGSC 9923 / NRRL Y-1056)</name>
    <name type="common">Yeast</name>
    <name type="synonym">Ashbya gossypii</name>
    <dbReference type="NCBI Taxonomy" id="284811"/>
    <lineage>
        <taxon>Eukaryota</taxon>
        <taxon>Fungi</taxon>
        <taxon>Dikarya</taxon>
        <taxon>Ascomycota</taxon>
        <taxon>Saccharomycotina</taxon>
        <taxon>Saccharomycetes</taxon>
        <taxon>Saccharomycetales</taxon>
        <taxon>Saccharomycetaceae</taxon>
        <taxon>Eremothecium</taxon>
    </lineage>
</organism>
<feature type="signal peptide" evidence="2">
    <location>
        <begin position="1"/>
        <end position="19"/>
    </location>
</feature>
<feature type="chain" id="PRO_0000399069" description="Increased recombination centers protein 22">
    <location>
        <begin position="20"/>
        <end position="220"/>
    </location>
</feature>
<feature type="topological domain" description="Lumenal" evidence="2">
    <location>
        <begin position="20"/>
        <end position="166"/>
    </location>
</feature>
<feature type="transmembrane region" description="Helical" evidence="2">
    <location>
        <begin position="167"/>
        <end position="186"/>
    </location>
</feature>
<feature type="topological domain" description="Cytoplasmic" evidence="2">
    <location>
        <begin position="187"/>
        <end position="220"/>
    </location>
</feature>
<protein>
    <recommendedName>
        <fullName>Increased recombination centers protein 22</fullName>
    </recommendedName>
</protein>
<accession>Q8J1F5</accession>
<accession>Q75AB8</accession>